<accession>A9M8B3</accession>
<comment type="function">
    <text evidence="1">Catalyzes the reversible reaction in which hydroxymethyl group from 5,10-methylenetetrahydrofolate is transferred onto alpha-ketoisovalerate to form ketopantoate.</text>
</comment>
<comment type="catalytic activity">
    <reaction evidence="1">
        <text>3-methyl-2-oxobutanoate + (6R)-5,10-methylene-5,6,7,8-tetrahydrofolate + H2O = 2-dehydropantoate + (6S)-5,6,7,8-tetrahydrofolate</text>
        <dbReference type="Rhea" id="RHEA:11824"/>
        <dbReference type="ChEBI" id="CHEBI:11561"/>
        <dbReference type="ChEBI" id="CHEBI:11851"/>
        <dbReference type="ChEBI" id="CHEBI:15377"/>
        <dbReference type="ChEBI" id="CHEBI:15636"/>
        <dbReference type="ChEBI" id="CHEBI:57453"/>
        <dbReference type="EC" id="2.1.2.11"/>
    </reaction>
</comment>
<comment type="cofactor">
    <cofactor evidence="1">
        <name>Mg(2+)</name>
        <dbReference type="ChEBI" id="CHEBI:18420"/>
    </cofactor>
    <text evidence="1">Binds 1 Mg(2+) ion per subunit.</text>
</comment>
<comment type="pathway">
    <text evidence="1">Cofactor biosynthesis; (R)-pantothenate biosynthesis; (R)-pantoate from 3-methyl-2-oxobutanoate: step 1/2.</text>
</comment>
<comment type="subunit">
    <text evidence="1">Homodecamer; pentamer of dimers.</text>
</comment>
<comment type="subcellular location">
    <subcellularLocation>
        <location evidence="1">Cytoplasm</location>
    </subcellularLocation>
</comment>
<comment type="similarity">
    <text evidence="1">Belongs to the PanB family.</text>
</comment>
<name>PANB_BRUC2</name>
<dbReference type="EC" id="2.1.2.11" evidence="1"/>
<dbReference type="EMBL" id="CP000872">
    <property type="protein sequence ID" value="ABX61429.1"/>
    <property type="molecule type" value="Genomic_DNA"/>
</dbReference>
<dbReference type="RefSeq" id="WP_002963495.1">
    <property type="nucleotide sequence ID" value="NC_010103.1"/>
</dbReference>
<dbReference type="SMR" id="A9M8B3"/>
<dbReference type="GeneID" id="97534281"/>
<dbReference type="KEGG" id="bcs:BCAN_A0339"/>
<dbReference type="HOGENOM" id="CLU_036645_1_0_5"/>
<dbReference type="PhylomeDB" id="A9M8B3"/>
<dbReference type="UniPathway" id="UPA00028">
    <property type="reaction ID" value="UER00003"/>
</dbReference>
<dbReference type="Proteomes" id="UP000001385">
    <property type="component" value="Chromosome I"/>
</dbReference>
<dbReference type="GO" id="GO:0005737">
    <property type="term" value="C:cytoplasm"/>
    <property type="evidence" value="ECO:0007669"/>
    <property type="project" value="UniProtKB-SubCell"/>
</dbReference>
<dbReference type="GO" id="GO:0003864">
    <property type="term" value="F:3-methyl-2-oxobutanoate hydroxymethyltransferase activity"/>
    <property type="evidence" value="ECO:0007669"/>
    <property type="project" value="UniProtKB-UniRule"/>
</dbReference>
<dbReference type="GO" id="GO:0000287">
    <property type="term" value="F:magnesium ion binding"/>
    <property type="evidence" value="ECO:0007669"/>
    <property type="project" value="TreeGrafter"/>
</dbReference>
<dbReference type="GO" id="GO:0015940">
    <property type="term" value="P:pantothenate biosynthetic process"/>
    <property type="evidence" value="ECO:0007669"/>
    <property type="project" value="UniProtKB-UniRule"/>
</dbReference>
<dbReference type="CDD" id="cd06557">
    <property type="entry name" value="KPHMT-like"/>
    <property type="match status" value="1"/>
</dbReference>
<dbReference type="FunFam" id="3.20.20.60:FF:000003">
    <property type="entry name" value="3-methyl-2-oxobutanoate hydroxymethyltransferase"/>
    <property type="match status" value="1"/>
</dbReference>
<dbReference type="Gene3D" id="3.20.20.60">
    <property type="entry name" value="Phosphoenolpyruvate-binding domains"/>
    <property type="match status" value="1"/>
</dbReference>
<dbReference type="HAMAP" id="MF_00156">
    <property type="entry name" value="PanB"/>
    <property type="match status" value="1"/>
</dbReference>
<dbReference type="InterPro" id="IPR003700">
    <property type="entry name" value="Pantoate_hydroxy_MeTrfase"/>
</dbReference>
<dbReference type="InterPro" id="IPR015813">
    <property type="entry name" value="Pyrv/PenolPyrv_kinase-like_dom"/>
</dbReference>
<dbReference type="InterPro" id="IPR040442">
    <property type="entry name" value="Pyrv_kinase-like_dom_sf"/>
</dbReference>
<dbReference type="NCBIfam" id="TIGR00222">
    <property type="entry name" value="panB"/>
    <property type="match status" value="1"/>
</dbReference>
<dbReference type="NCBIfam" id="NF001452">
    <property type="entry name" value="PRK00311.1"/>
    <property type="match status" value="1"/>
</dbReference>
<dbReference type="PANTHER" id="PTHR20881">
    <property type="entry name" value="3-METHYL-2-OXOBUTANOATE HYDROXYMETHYLTRANSFERASE"/>
    <property type="match status" value="1"/>
</dbReference>
<dbReference type="PANTHER" id="PTHR20881:SF0">
    <property type="entry name" value="3-METHYL-2-OXOBUTANOATE HYDROXYMETHYLTRANSFERASE"/>
    <property type="match status" value="1"/>
</dbReference>
<dbReference type="Pfam" id="PF02548">
    <property type="entry name" value="Pantoate_transf"/>
    <property type="match status" value="1"/>
</dbReference>
<dbReference type="PIRSF" id="PIRSF000388">
    <property type="entry name" value="Pantoate_hydroxy_MeTrfase"/>
    <property type="match status" value="1"/>
</dbReference>
<dbReference type="SUPFAM" id="SSF51621">
    <property type="entry name" value="Phosphoenolpyruvate/pyruvate domain"/>
    <property type="match status" value="1"/>
</dbReference>
<evidence type="ECO:0000255" key="1">
    <source>
        <dbReference type="HAMAP-Rule" id="MF_00156"/>
    </source>
</evidence>
<feature type="chain" id="PRO_1000076817" description="3-methyl-2-oxobutanoate hydroxymethyltransferase">
    <location>
        <begin position="1"/>
        <end position="275"/>
    </location>
</feature>
<feature type="active site" description="Proton acceptor" evidence="1">
    <location>
        <position position="187"/>
    </location>
</feature>
<feature type="binding site" evidence="1">
    <location>
        <begin position="49"/>
        <end position="50"/>
    </location>
    <ligand>
        <name>3-methyl-2-oxobutanoate</name>
        <dbReference type="ChEBI" id="CHEBI:11851"/>
    </ligand>
</feature>
<feature type="binding site" evidence="1">
    <location>
        <position position="49"/>
    </location>
    <ligand>
        <name>Mg(2+)</name>
        <dbReference type="ChEBI" id="CHEBI:18420"/>
    </ligand>
</feature>
<feature type="binding site" evidence="1">
    <location>
        <position position="88"/>
    </location>
    <ligand>
        <name>3-methyl-2-oxobutanoate</name>
        <dbReference type="ChEBI" id="CHEBI:11851"/>
    </ligand>
</feature>
<feature type="binding site" evidence="1">
    <location>
        <position position="88"/>
    </location>
    <ligand>
        <name>Mg(2+)</name>
        <dbReference type="ChEBI" id="CHEBI:18420"/>
    </ligand>
</feature>
<feature type="binding site" evidence="1">
    <location>
        <position position="118"/>
    </location>
    <ligand>
        <name>3-methyl-2-oxobutanoate</name>
        <dbReference type="ChEBI" id="CHEBI:11851"/>
    </ligand>
</feature>
<feature type="binding site" evidence="1">
    <location>
        <position position="120"/>
    </location>
    <ligand>
        <name>Mg(2+)</name>
        <dbReference type="ChEBI" id="CHEBI:18420"/>
    </ligand>
</feature>
<gene>
    <name evidence="1" type="primary">panB</name>
    <name type="ordered locus">BCAN_A0339</name>
</gene>
<keyword id="KW-0963">Cytoplasm</keyword>
<keyword id="KW-0460">Magnesium</keyword>
<keyword id="KW-0479">Metal-binding</keyword>
<keyword id="KW-0566">Pantothenate biosynthesis</keyword>
<keyword id="KW-1185">Reference proteome</keyword>
<keyword id="KW-0808">Transferase</keyword>
<sequence>MSAPVTRKRLTPKVIQAMKGECPIVSLTAYTTPVARLLDPHCDLLLVGDSLGMVLYGMESTLAVTLDMMIMHGQAVMRGTSHACVIVDMPFGSYQESKEQAFRNAARVMQETGCDGVKLEGGEEMAETVAFLVRRGIPVFGHVGLMPQQVNTVGGFRSLGRGDDEAGKIRRDAQAIAQAGAFAVVIEGTVEPLAREITALIDIPTVGIGASSACDGQVLVSDDMLGLFQDFTPRFVKRFAHLAPQVSQAAEAYAEEVRARRFPGPEHVFGAKPGA</sequence>
<proteinExistence type="inferred from homology"/>
<reference key="1">
    <citation type="submission" date="2007-10" db="EMBL/GenBank/DDBJ databases">
        <title>Brucella canis ATCC 23365 whole genome shotgun sequencing project.</title>
        <authorList>
            <person name="Setubal J.C."/>
            <person name="Bowns C."/>
            <person name="Boyle S."/>
            <person name="Crasta O.R."/>
            <person name="Czar M.J."/>
            <person name="Dharmanolla C."/>
            <person name="Gillespie J.J."/>
            <person name="Kenyon R.W."/>
            <person name="Lu J."/>
            <person name="Mane S."/>
            <person name="Mohapatra S."/>
            <person name="Nagrani S."/>
            <person name="Purkayastha A."/>
            <person name="Rajasimha H.K."/>
            <person name="Shallom J.M."/>
            <person name="Shallom S."/>
            <person name="Shukla M."/>
            <person name="Snyder E.E."/>
            <person name="Sobral B.W."/>
            <person name="Wattam A.R."/>
            <person name="Will R."/>
            <person name="Williams K."/>
            <person name="Yoo H."/>
            <person name="Bruce D."/>
            <person name="Detter C."/>
            <person name="Munk C."/>
            <person name="Brettin T.S."/>
        </authorList>
    </citation>
    <scope>NUCLEOTIDE SEQUENCE [LARGE SCALE GENOMIC DNA]</scope>
    <source>
        <strain>ATCC 23365 / NCTC 10854 / RM-666</strain>
    </source>
</reference>
<organism>
    <name type="scientific">Brucella canis (strain ATCC 23365 / NCTC 10854 / RM-666)</name>
    <dbReference type="NCBI Taxonomy" id="483179"/>
    <lineage>
        <taxon>Bacteria</taxon>
        <taxon>Pseudomonadati</taxon>
        <taxon>Pseudomonadota</taxon>
        <taxon>Alphaproteobacteria</taxon>
        <taxon>Hyphomicrobiales</taxon>
        <taxon>Brucellaceae</taxon>
        <taxon>Brucella/Ochrobactrum group</taxon>
        <taxon>Brucella</taxon>
    </lineage>
</organism>
<protein>
    <recommendedName>
        <fullName evidence="1">3-methyl-2-oxobutanoate hydroxymethyltransferase</fullName>
        <ecNumber evidence="1">2.1.2.11</ecNumber>
    </recommendedName>
    <alternativeName>
        <fullName evidence="1">Ketopantoate hydroxymethyltransferase</fullName>
        <shortName evidence="1">KPHMT</shortName>
    </alternativeName>
</protein>